<dbReference type="EMBL" id="AE005174">
    <property type="protein sequence ID" value="AAG54942.1"/>
    <property type="molecule type" value="Genomic_DNA"/>
</dbReference>
<dbReference type="EMBL" id="BA000007">
    <property type="protein sequence ID" value="BAB34069.1"/>
    <property type="molecule type" value="Genomic_DNA"/>
</dbReference>
<dbReference type="PIR" id="B85560">
    <property type="entry name" value="B85560"/>
</dbReference>
<dbReference type="PIR" id="F90709">
    <property type="entry name" value="F90709"/>
</dbReference>
<dbReference type="RefSeq" id="NP_308673.1">
    <property type="nucleotide sequence ID" value="NC_002695.1"/>
</dbReference>
<dbReference type="RefSeq" id="WP_000278505.1">
    <property type="nucleotide sequence ID" value="NZ_VOAI01000012.1"/>
</dbReference>
<dbReference type="SMR" id="Q8XBT3"/>
<dbReference type="STRING" id="155864.Z0751"/>
<dbReference type="GeneID" id="75205030"/>
<dbReference type="GeneID" id="917005"/>
<dbReference type="KEGG" id="ece:Z0751"/>
<dbReference type="KEGG" id="ecs:ECs_0646"/>
<dbReference type="PATRIC" id="fig|386585.9.peg.757"/>
<dbReference type="eggNOG" id="COG0589">
    <property type="taxonomic scope" value="Bacteria"/>
</dbReference>
<dbReference type="HOGENOM" id="CLU_049301_12_0_6"/>
<dbReference type="OMA" id="VIRHTHI"/>
<dbReference type="Proteomes" id="UP000000558">
    <property type="component" value="Chromosome"/>
</dbReference>
<dbReference type="Proteomes" id="UP000002519">
    <property type="component" value="Chromosome"/>
</dbReference>
<dbReference type="CDD" id="cd00293">
    <property type="entry name" value="USP-like"/>
    <property type="match status" value="1"/>
</dbReference>
<dbReference type="FunFam" id="3.40.50.620:FF:000076">
    <property type="entry name" value="Universal stress protein G"/>
    <property type="match status" value="1"/>
</dbReference>
<dbReference type="Gene3D" id="3.40.50.620">
    <property type="entry name" value="HUPs"/>
    <property type="match status" value="1"/>
</dbReference>
<dbReference type="InterPro" id="IPR014729">
    <property type="entry name" value="Rossmann-like_a/b/a_fold"/>
</dbReference>
<dbReference type="InterPro" id="IPR006015">
    <property type="entry name" value="Universal_stress_UspA"/>
</dbReference>
<dbReference type="InterPro" id="IPR006016">
    <property type="entry name" value="UspA"/>
</dbReference>
<dbReference type="NCBIfam" id="NF012000">
    <property type="entry name" value="PRK15456.1"/>
    <property type="match status" value="1"/>
</dbReference>
<dbReference type="PANTHER" id="PTHR46268">
    <property type="entry name" value="STRESS RESPONSE PROTEIN NHAX"/>
    <property type="match status" value="1"/>
</dbReference>
<dbReference type="PANTHER" id="PTHR46268:SF6">
    <property type="entry name" value="UNIVERSAL STRESS PROTEIN UP12"/>
    <property type="match status" value="1"/>
</dbReference>
<dbReference type="Pfam" id="PF00582">
    <property type="entry name" value="Usp"/>
    <property type="match status" value="1"/>
</dbReference>
<dbReference type="PRINTS" id="PR01438">
    <property type="entry name" value="UNVRSLSTRESS"/>
</dbReference>
<dbReference type="SUPFAM" id="SSF52402">
    <property type="entry name" value="Adenine nucleotide alpha hydrolases-like"/>
    <property type="match status" value="1"/>
</dbReference>
<reference key="1">
    <citation type="journal article" date="2001" name="Nature">
        <title>Genome sequence of enterohaemorrhagic Escherichia coli O157:H7.</title>
        <authorList>
            <person name="Perna N.T."/>
            <person name="Plunkett G. III"/>
            <person name="Burland V."/>
            <person name="Mau B."/>
            <person name="Glasner J.D."/>
            <person name="Rose D.J."/>
            <person name="Mayhew G.F."/>
            <person name="Evans P.S."/>
            <person name="Gregor J."/>
            <person name="Kirkpatrick H.A."/>
            <person name="Posfai G."/>
            <person name="Hackett J."/>
            <person name="Klink S."/>
            <person name="Boutin A."/>
            <person name="Shao Y."/>
            <person name="Miller L."/>
            <person name="Grotbeck E.J."/>
            <person name="Davis N.W."/>
            <person name="Lim A."/>
            <person name="Dimalanta E.T."/>
            <person name="Potamousis K."/>
            <person name="Apodaca J."/>
            <person name="Anantharaman T.S."/>
            <person name="Lin J."/>
            <person name="Yen G."/>
            <person name="Schwartz D.C."/>
            <person name="Welch R.A."/>
            <person name="Blattner F.R."/>
        </authorList>
    </citation>
    <scope>NUCLEOTIDE SEQUENCE [LARGE SCALE GENOMIC DNA]</scope>
    <source>
        <strain>O157:H7 / EDL933 / ATCC 700927 / EHEC</strain>
    </source>
</reference>
<reference key="2">
    <citation type="journal article" date="2001" name="DNA Res.">
        <title>Complete genome sequence of enterohemorrhagic Escherichia coli O157:H7 and genomic comparison with a laboratory strain K-12.</title>
        <authorList>
            <person name="Hayashi T."/>
            <person name="Makino K."/>
            <person name="Ohnishi M."/>
            <person name="Kurokawa K."/>
            <person name="Ishii K."/>
            <person name="Yokoyama K."/>
            <person name="Han C.-G."/>
            <person name="Ohtsubo E."/>
            <person name="Nakayama K."/>
            <person name="Murata T."/>
            <person name="Tanaka M."/>
            <person name="Tobe T."/>
            <person name="Iida T."/>
            <person name="Takami H."/>
            <person name="Honda T."/>
            <person name="Sasakawa C."/>
            <person name="Ogasawara N."/>
            <person name="Yasunaga T."/>
            <person name="Kuhara S."/>
            <person name="Shiba T."/>
            <person name="Hattori M."/>
            <person name="Shinagawa H."/>
        </authorList>
    </citation>
    <scope>NUCLEOTIDE SEQUENCE [LARGE SCALE GENOMIC DNA]</scope>
    <source>
        <strain>O157:H7 / Sakai / RIMD 0509952 / EHEC</strain>
    </source>
</reference>
<gene>
    <name type="primary">uspG</name>
    <name type="ordered locus">Z0751</name>
    <name type="ordered locus">ECs0646</name>
</gene>
<sequence>MYKTIIMPVDVFEMELSDKAVRHAEFLAQDDGVIHLLHVLPGSASLSLHRFAADVRRFEEHLQHEAEERLQTMVSHFTIDPSRIKQHVRFGSVRDEVNELAEELGADVVVIGSRNPSISTHLLGSNASSVIRHANLPVLVVR</sequence>
<proteinExistence type="inferred from homology"/>
<name>USPG_ECO57</name>
<comment type="similarity">
    <text evidence="1">Belongs to the universal stress protein A family.</text>
</comment>
<accession>Q8XBT3</accession>
<evidence type="ECO:0000305" key="1"/>
<feature type="chain" id="PRO_0000147434" description="Universal stress protein G">
    <location>
        <begin position="1"/>
        <end position="142"/>
    </location>
</feature>
<organism>
    <name type="scientific">Escherichia coli O157:H7</name>
    <dbReference type="NCBI Taxonomy" id="83334"/>
    <lineage>
        <taxon>Bacteria</taxon>
        <taxon>Pseudomonadati</taxon>
        <taxon>Pseudomonadota</taxon>
        <taxon>Gammaproteobacteria</taxon>
        <taxon>Enterobacterales</taxon>
        <taxon>Enterobacteriaceae</taxon>
        <taxon>Escherichia</taxon>
    </lineage>
</organism>
<keyword id="KW-1185">Reference proteome</keyword>
<protein>
    <recommendedName>
        <fullName>Universal stress protein G</fullName>
    </recommendedName>
</protein>